<evidence type="ECO:0000255" key="1">
    <source>
        <dbReference type="HAMAP-Rule" id="MF_00375"/>
    </source>
</evidence>
<comment type="catalytic activity">
    <reaction evidence="1">
        <text>(S)-4-amino-5-oxopentanoate = 5-aminolevulinate</text>
        <dbReference type="Rhea" id="RHEA:14265"/>
        <dbReference type="ChEBI" id="CHEBI:57501"/>
        <dbReference type="ChEBI" id="CHEBI:356416"/>
        <dbReference type="EC" id="5.4.3.8"/>
    </reaction>
</comment>
<comment type="cofactor">
    <cofactor evidence="1">
        <name>pyridoxal 5'-phosphate</name>
        <dbReference type="ChEBI" id="CHEBI:597326"/>
    </cofactor>
</comment>
<comment type="pathway">
    <text evidence="1">Porphyrin-containing compound metabolism; protoporphyrin-IX biosynthesis; 5-aminolevulinate from L-glutamyl-tRNA(Glu): step 2/2.</text>
</comment>
<comment type="pathway">
    <text evidence="1">Porphyrin-containing compound metabolism; chlorophyll biosynthesis.</text>
</comment>
<comment type="subunit">
    <text evidence="1">Homodimer.</text>
</comment>
<comment type="subcellular location">
    <subcellularLocation>
        <location evidence="1">Cytoplasm</location>
    </subcellularLocation>
</comment>
<comment type="similarity">
    <text evidence="1">Belongs to the class-III pyridoxal-phosphate-dependent aminotransferase family. HemL subfamily.</text>
</comment>
<feature type="chain" id="PRO_1000121908" description="Glutamate-1-semialdehyde 2,1-aminomutase">
    <location>
        <begin position="1"/>
        <end position="432"/>
    </location>
</feature>
<feature type="modified residue" description="N6-(pyridoxal phosphate)lysine" evidence="1">
    <location>
        <position position="271"/>
    </location>
</feature>
<protein>
    <recommendedName>
        <fullName evidence="1">Glutamate-1-semialdehyde 2,1-aminomutase</fullName>
        <shortName evidence="1">GSA</shortName>
        <ecNumber evidence="1">5.4.3.8</ecNumber>
    </recommendedName>
    <alternativeName>
        <fullName evidence="1">Glutamate-1-semialdehyde aminotransferase</fullName>
        <shortName evidence="1">GSA-AT</shortName>
    </alternativeName>
</protein>
<proteinExistence type="inferred from homology"/>
<organism>
    <name type="scientific">Prochlorococcus marinus (strain MIT 9211)</name>
    <dbReference type="NCBI Taxonomy" id="93059"/>
    <lineage>
        <taxon>Bacteria</taxon>
        <taxon>Bacillati</taxon>
        <taxon>Cyanobacteriota</taxon>
        <taxon>Cyanophyceae</taxon>
        <taxon>Synechococcales</taxon>
        <taxon>Prochlorococcaceae</taxon>
        <taxon>Prochlorococcus</taxon>
    </lineage>
</organism>
<dbReference type="EC" id="5.4.3.8" evidence="1"/>
<dbReference type="EMBL" id="CP000878">
    <property type="protein sequence ID" value="ABX08415.1"/>
    <property type="molecule type" value="Genomic_DNA"/>
</dbReference>
<dbReference type="RefSeq" id="WP_012195038.1">
    <property type="nucleotide sequence ID" value="NC_009976.1"/>
</dbReference>
<dbReference type="SMR" id="A9BEA5"/>
<dbReference type="STRING" id="93059.P9211_04841"/>
<dbReference type="KEGG" id="pmj:P9211_04841"/>
<dbReference type="eggNOG" id="COG0001">
    <property type="taxonomic scope" value="Bacteria"/>
</dbReference>
<dbReference type="HOGENOM" id="CLU_016922_1_5_3"/>
<dbReference type="OrthoDB" id="9807885at2"/>
<dbReference type="UniPathway" id="UPA00251">
    <property type="reaction ID" value="UER00317"/>
</dbReference>
<dbReference type="UniPathway" id="UPA00668"/>
<dbReference type="Proteomes" id="UP000000788">
    <property type="component" value="Chromosome"/>
</dbReference>
<dbReference type="GO" id="GO:0005737">
    <property type="term" value="C:cytoplasm"/>
    <property type="evidence" value="ECO:0007669"/>
    <property type="project" value="UniProtKB-SubCell"/>
</dbReference>
<dbReference type="GO" id="GO:0042286">
    <property type="term" value="F:glutamate-1-semialdehyde 2,1-aminomutase activity"/>
    <property type="evidence" value="ECO:0007669"/>
    <property type="project" value="UniProtKB-UniRule"/>
</dbReference>
<dbReference type="GO" id="GO:0030170">
    <property type="term" value="F:pyridoxal phosphate binding"/>
    <property type="evidence" value="ECO:0007669"/>
    <property type="project" value="InterPro"/>
</dbReference>
<dbReference type="GO" id="GO:0008483">
    <property type="term" value="F:transaminase activity"/>
    <property type="evidence" value="ECO:0007669"/>
    <property type="project" value="InterPro"/>
</dbReference>
<dbReference type="GO" id="GO:0015995">
    <property type="term" value="P:chlorophyll biosynthetic process"/>
    <property type="evidence" value="ECO:0007669"/>
    <property type="project" value="UniProtKB-UniRule"/>
</dbReference>
<dbReference type="GO" id="GO:0006782">
    <property type="term" value="P:protoporphyrinogen IX biosynthetic process"/>
    <property type="evidence" value="ECO:0007669"/>
    <property type="project" value="UniProtKB-UniRule"/>
</dbReference>
<dbReference type="CDD" id="cd00610">
    <property type="entry name" value="OAT_like"/>
    <property type="match status" value="1"/>
</dbReference>
<dbReference type="FunFam" id="3.40.640.10:FF:000021">
    <property type="entry name" value="Glutamate-1-semialdehyde 2,1-aminomutase"/>
    <property type="match status" value="1"/>
</dbReference>
<dbReference type="Gene3D" id="3.90.1150.10">
    <property type="entry name" value="Aspartate Aminotransferase, domain 1"/>
    <property type="match status" value="1"/>
</dbReference>
<dbReference type="Gene3D" id="3.40.640.10">
    <property type="entry name" value="Type I PLP-dependent aspartate aminotransferase-like (Major domain)"/>
    <property type="match status" value="1"/>
</dbReference>
<dbReference type="HAMAP" id="MF_00375">
    <property type="entry name" value="HemL_aminotrans_3"/>
    <property type="match status" value="1"/>
</dbReference>
<dbReference type="InterPro" id="IPR004639">
    <property type="entry name" value="4pyrrol_synth_GluAld_NH2Trfase"/>
</dbReference>
<dbReference type="InterPro" id="IPR005814">
    <property type="entry name" value="Aminotrans_3"/>
</dbReference>
<dbReference type="InterPro" id="IPR049704">
    <property type="entry name" value="Aminotrans_3_PPA_site"/>
</dbReference>
<dbReference type="InterPro" id="IPR015424">
    <property type="entry name" value="PyrdxlP-dep_Trfase"/>
</dbReference>
<dbReference type="InterPro" id="IPR015421">
    <property type="entry name" value="PyrdxlP-dep_Trfase_major"/>
</dbReference>
<dbReference type="InterPro" id="IPR015422">
    <property type="entry name" value="PyrdxlP-dep_Trfase_small"/>
</dbReference>
<dbReference type="NCBIfam" id="TIGR00713">
    <property type="entry name" value="hemL"/>
    <property type="match status" value="1"/>
</dbReference>
<dbReference type="NCBIfam" id="NF000818">
    <property type="entry name" value="PRK00062.1"/>
    <property type="match status" value="1"/>
</dbReference>
<dbReference type="PANTHER" id="PTHR43713">
    <property type="entry name" value="GLUTAMATE-1-SEMIALDEHYDE 2,1-AMINOMUTASE"/>
    <property type="match status" value="1"/>
</dbReference>
<dbReference type="PANTHER" id="PTHR43713:SF3">
    <property type="entry name" value="GLUTAMATE-1-SEMIALDEHYDE 2,1-AMINOMUTASE 1, CHLOROPLASTIC-RELATED"/>
    <property type="match status" value="1"/>
</dbReference>
<dbReference type="Pfam" id="PF00202">
    <property type="entry name" value="Aminotran_3"/>
    <property type="match status" value="1"/>
</dbReference>
<dbReference type="SUPFAM" id="SSF53383">
    <property type="entry name" value="PLP-dependent transferases"/>
    <property type="match status" value="1"/>
</dbReference>
<dbReference type="PROSITE" id="PS00600">
    <property type="entry name" value="AA_TRANSFER_CLASS_3"/>
    <property type="match status" value="1"/>
</dbReference>
<accession>A9BEA5</accession>
<sequence length="432" mass="45991">MTNAFNTNLSQAVFNAAQDLMPGGVSSPVRAFKSVNGDPIVFDRVKGPYAWDLDGNRFIDYVGSWGPAICGHSHPEVIAALQEALEKGTSFGAPCELENKLAGMVIEAVPSVEMVRFVNSGTEACMAVLRLMRAFTGRDKLIKFEGCYHGHADMFLVKAGSGVATLGLPDSPGVPRSTTSNTLTAPYNDLEAVKALFAENPDAISGVILEPIVGNAGFIPPEPGFLEGLRELTKENGSLLVFDEVMTGFRISYGGAQERFGVTPDLTTMGKVIGGGLPVGAYGGRKEIMSMVAPAGPMYQAGTLSGNPLAMTAGIKTLELLKQEGTYERLESLSQRLINGICESAKKAGIPITGSFISGMFGFYLCEGPVRNFQEAKQTNAELFGKLHRAMLEKGIYLAPSAFEAGFTSLAHSNDDIETTIKAFEASFSEIV</sequence>
<name>GSA_PROM4</name>
<gene>
    <name evidence="1" type="primary">hemL</name>
    <name type="ordered locus">P9211_04841</name>
</gene>
<keyword id="KW-0149">Chlorophyll biosynthesis</keyword>
<keyword id="KW-0963">Cytoplasm</keyword>
<keyword id="KW-0413">Isomerase</keyword>
<keyword id="KW-0627">Porphyrin biosynthesis</keyword>
<keyword id="KW-0663">Pyridoxal phosphate</keyword>
<keyword id="KW-1185">Reference proteome</keyword>
<reference key="1">
    <citation type="journal article" date="2007" name="PLoS Genet.">
        <title>Patterns and implications of gene gain and loss in the evolution of Prochlorococcus.</title>
        <authorList>
            <person name="Kettler G.C."/>
            <person name="Martiny A.C."/>
            <person name="Huang K."/>
            <person name="Zucker J."/>
            <person name="Coleman M.L."/>
            <person name="Rodrigue S."/>
            <person name="Chen F."/>
            <person name="Lapidus A."/>
            <person name="Ferriera S."/>
            <person name="Johnson J."/>
            <person name="Steglich C."/>
            <person name="Church G.M."/>
            <person name="Richardson P."/>
            <person name="Chisholm S.W."/>
        </authorList>
    </citation>
    <scope>NUCLEOTIDE SEQUENCE [LARGE SCALE GENOMIC DNA]</scope>
    <source>
        <strain>MIT 9211</strain>
    </source>
</reference>